<evidence type="ECO:0000250" key="1">
    <source>
        <dbReference type="UniProtKB" id="A0A4P9I8G4"/>
    </source>
</evidence>
<evidence type="ECO:0000255" key="2"/>
<evidence type="ECO:0000255" key="3">
    <source>
        <dbReference type="PROSITE-ProRule" id="PRU00498"/>
    </source>
</evidence>
<evidence type="ECO:0000256" key="4">
    <source>
        <dbReference type="SAM" id="MobiDB-lite"/>
    </source>
</evidence>
<evidence type="ECO:0000269" key="5">
    <source>
    </source>
</evidence>
<evidence type="ECO:0000269" key="6">
    <source>
    </source>
</evidence>
<evidence type="ECO:0000303" key="7">
    <source>
    </source>
</evidence>
<evidence type="ECO:0000303" key="8">
    <source>
    </source>
</evidence>
<evidence type="ECO:0000303" key="9">
    <source>
    </source>
</evidence>
<evidence type="ECO:0000305" key="10"/>
<evidence type="ECO:0000305" key="11">
    <source>
    </source>
</evidence>
<gene>
    <name evidence="8" type="primary">BIM1</name>
    <name evidence="9" type="synonym">CBI1</name>
    <name evidence="7" type="synonym">X325</name>
    <name evidence="8" type="ORF">CNAG_02775</name>
</gene>
<proteinExistence type="evidence at protein level"/>
<name>X325_CRYNH</name>
<accession>J9VHN6</accession>
<dbReference type="EMBL" id="CP003822">
    <property type="protein sequence ID" value="AFR93917.1"/>
    <property type="molecule type" value="Genomic_DNA"/>
</dbReference>
<dbReference type="RefSeq" id="XP_012048123.1">
    <property type="nucleotide sequence ID" value="XM_012192733.1"/>
</dbReference>
<dbReference type="SMR" id="J9VHN6"/>
<dbReference type="GlyCosmos" id="J9VHN6">
    <property type="glycosylation" value="5 sites, No reported glycans"/>
</dbReference>
<dbReference type="GeneID" id="23886334"/>
<dbReference type="KEGG" id="cng:CNAG_02775"/>
<dbReference type="VEuPathDB" id="FungiDB:CNAG_02775"/>
<dbReference type="HOGENOM" id="CLU_070647_3_1_1"/>
<dbReference type="OrthoDB" id="8689at5206"/>
<dbReference type="PHI-base" id="PHI:9961"/>
<dbReference type="Proteomes" id="UP000010091">
    <property type="component" value="Chromosome 3"/>
</dbReference>
<dbReference type="GO" id="GO:0005886">
    <property type="term" value="C:plasma membrane"/>
    <property type="evidence" value="ECO:0007669"/>
    <property type="project" value="UniProtKB-SubCell"/>
</dbReference>
<dbReference type="GO" id="GO:0098552">
    <property type="term" value="C:side of membrane"/>
    <property type="evidence" value="ECO:0007669"/>
    <property type="project" value="UniProtKB-KW"/>
</dbReference>
<dbReference type="GO" id="GO:0046872">
    <property type="term" value="F:metal ion binding"/>
    <property type="evidence" value="ECO:0007669"/>
    <property type="project" value="UniProtKB-KW"/>
</dbReference>
<dbReference type="CDD" id="cd21176">
    <property type="entry name" value="LPMO_auxiliary-like"/>
    <property type="match status" value="1"/>
</dbReference>
<dbReference type="InterPro" id="IPR046936">
    <property type="entry name" value="BIM1-like"/>
</dbReference>
<dbReference type="InterPro" id="IPR046530">
    <property type="entry name" value="BIM1-like_dom"/>
</dbReference>
<dbReference type="PANTHER" id="PTHR34992:SF11">
    <property type="entry name" value="COPPER ACQUISITION FACTOR BIM1-LIKE DOMAIN-CONTAINING PROTEIN"/>
    <property type="match status" value="1"/>
</dbReference>
<dbReference type="PANTHER" id="PTHR34992">
    <property type="entry name" value="HYPHAL ANASTAMOSIS-7 PROTEIN"/>
    <property type="match status" value="1"/>
</dbReference>
<dbReference type="Pfam" id="PF20238">
    <property type="entry name" value="BIM1-like_dom"/>
    <property type="match status" value="1"/>
</dbReference>
<protein>
    <recommendedName>
        <fullName evidence="8">Copper acquisition factor BIM1</fullName>
    </recommendedName>
    <alternativeName>
        <fullName evidence="8">BCS-inducible membrane protein 1</fullName>
    </alternativeName>
    <alternativeName>
        <fullName evidence="9">Copper binding and release protein 1</fullName>
    </alternativeName>
    <alternativeName>
        <fullName evidence="8">Lytic polysaccharide monooxygenase-like protein BIM1</fullName>
        <shortName evidence="8">LPMO-like protein BIM1</shortName>
    </alternativeName>
    <alternativeName>
        <fullName evidence="7">X325 family protein BIM1</fullName>
    </alternativeName>
</protein>
<comment type="function">
    <text evidence="5 6 11">Lytic polysaccharide monooxygenase-like protein that has diverged to biological functions other than polysaccharide degradation since it does not perform oxidative cleavage of polysaccharides (Probable). Cell surface-bound protein that functions in the copper-accumulation pathway shared by the CUF1-dependent copper transporter CTR1 (PubMed:31932719, PubMed:35737716). Involved in maintaining cell wall integrity during copper deficiency (PubMed:35737716). Binds Cu(2+) with an estimated 1:1 stoichiometry and might serve as an extracellular copper ligand (PubMed:31932719). FRE4 and FRE7 metalloreductases probably function together with CTR1 and BIM1 to liberate the Cu(2+) bound to the BIM1 copper-binding site for subsequent import of Cu(+) into the cell by CTR1, via the reduction of BIM1-bound Cu(2+) to Cu(+) to reduce binding affinity for BIM1 but increase affinity for CTR1 (PubMed:31932719). Facilitates copper acquisition in the brain of mammalian hosts and acts as a copper-dependent virulence trait in fungal meningitis (PubMed:31932719). While BIM1 plays a critical role in cryptococcal meningitis, at least in part through its role in copper acquisition, it could play additional roles during copper limitation or as a means to invade and colonize host tissues in the brain, by compromising host carbohydrate integrity via its lytic polysaccharide monooxygenase (LPMO) activity, which has still to be determined (PubMed:31932719).</text>
</comment>
<comment type="cofactor">
    <cofactor evidence="5">
        <name>Cu(2+)</name>
        <dbReference type="ChEBI" id="CHEBI:29036"/>
    </cofactor>
    <text evidence="5">Binds 1 copper ion per subunit.</text>
</comment>
<comment type="subunit">
    <text evidence="5">Interacts with the CUF1-dependent copper transporter CTR1.</text>
</comment>
<comment type="subcellular location">
    <subcellularLocation>
        <location evidence="2">Cell membrane</location>
        <topology evidence="2">Lipid-anchor</topology>
        <topology evidence="2">GPI-anchor</topology>
    </subcellularLocation>
    <text evidence="11">Proteins attached to a GPI anchor via their C terminus are found in the outer leaflet of the lipid bilayer facing the extracellular environment. GPI anchors can also be considered as predetermined breaking points, which allow the release of proteins into the extracellular environment upon enzymatic cleavage.</text>
</comment>
<comment type="induction">
    <text evidence="5">Expression is highly induced in response to copper limitation by the copper-specific chelator bathocuproine disulfonic acid (BCS) (PubMed:31932719). The BIM1 promoter harbors three conserved Cu-responsive elements (CuRE), which are critical for CUF1 binding and activation under copper-limiting conditions, beginning at positions -239, -268 and -516 (PubMed:31932719). Consistent with their presence, binding of the CUF1 copper-sensing transcription factor to the BIM1 promoter is strongly induced under copper-limiting conditions and expression of BIM1 under these conditions is CUF1-dependent (PubMed:31932719).</text>
</comment>
<comment type="disruption phenotype">
    <text evidence="5 6">Exhibits growth defect on copper-deficient medium ot in the presence of the copper-specific chelator bathocuproine disulfonic acid (BCS) (PubMed:31932719). Shows a reduction in cell-associated copper, in the enzymatic activity of Cu/Zn superoxide dismutase, in laccase-dependent melanin production and in the accumulation of cellular iron, a well-established copper-dependent process (PubMed:31932719). Shows a distinct cell wall electron density pattern, which is not due to overall difference in cell associated copper levels or copper adsorption ability (PubMed:35737716). Leads to a reduction in the inner cell wall chito-oligomer layer when exposed to copper-deficiency (PubMed:35737716). Does not affect virulence in an A/J mouse pulmonary infection model (PubMed:31932719).</text>
</comment>
<comment type="similarity">
    <text evidence="10">Belongs to the X325 family.</text>
</comment>
<keyword id="KW-1003">Cell membrane</keyword>
<keyword id="KW-0186">Copper</keyword>
<keyword id="KW-0325">Glycoprotein</keyword>
<keyword id="KW-0336">GPI-anchor</keyword>
<keyword id="KW-0449">Lipoprotein</keyword>
<keyword id="KW-0472">Membrane</keyword>
<keyword id="KW-0479">Metal-binding</keyword>
<keyword id="KW-0732">Signal</keyword>
<feature type="signal peptide" evidence="2">
    <location>
        <begin position="1"/>
        <end position="19"/>
    </location>
</feature>
<feature type="chain" id="PRO_5003829135" description="Copper acquisition factor BIM1">
    <location>
        <begin position="20"/>
        <end position="190"/>
    </location>
</feature>
<feature type="propeptide" id="PRO_0000449516" description="Removed in mature form" evidence="2">
    <location>
        <begin position="191"/>
        <end position="218"/>
    </location>
</feature>
<feature type="region of interest" description="Disordered" evidence="4">
    <location>
        <begin position="160"/>
        <end position="194"/>
    </location>
</feature>
<feature type="compositionally biased region" description="Low complexity" evidence="4">
    <location>
        <begin position="165"/>
        <end position="194"/>
    </location>
</feature>
<feature type="binding site" evidence="1">
    <location>
        <position position="20"/>
    </location>
    <ligand>
        <name>Cu(2+)</name>
        <dbReference type="ChEBI" id="CHEBI:29036"/>
    </ligand>
</feature>
<feature type="binding site" evidence="1">
    <location>
        <position position="65"/>
    </location>
    <ligand>
        <name>Cu(2+)</name>
        <dbReference type="ChEBI" id="CHEBI:29036"/>
    </ligand>
</feature>
<feature type="binding site" evidence="1">
    <location>
        <position position="138"/>
    </location>
    <ligand>
        <name>Cu(2+)</name>
        <dbReference type="ChEBI" id="CHEBI:29036"/>
    </ligand>
</feature>
<feature type="lipid moiety-binding region" description="GPI-anchor amidated serine" evidence="2">
    <location>
        <position position="190"/>
    </location>
</feature>
<feature type="glycosylation site" description="N-linked (GlcNAc...) asparagine" evidence="3">
    <location>
        <position position="87"/>
    </location>
</feature>
<feature type="glycosylation site" description="N-linked (GlcNAc...) asparagine" evidence="3">
    <location>
        <position position="91"/>
    </location>
</feature>
<feature type="glycosylation site" description="N-linked (GlcNAc...) asparagine" evidence="3">
    <location>
        <position position="124"/>
    </location>
</feature>
<feature type="glycosylation site" description="N-linked (GlcNAc...) asparagine" evidence="3">
    <location>
        <position position="158"/>
    </location>
</feature>
<feature type="glycosylation site" description="N-linked (GlcNAc...) asparagine" evidence="3">
    <location>
        <position position="170"/>
    </location>
</feature>
<feature type="mutagenesis site" description="Leads to a hypomelanization phenotype and growth defect on copper-deficient conditions." evidence="5">
    <original>H</original>
    <variation>A</variation>
    <location>
        <position position="20"/>
    </location>
</feature>
<feature type="mutagenesis site" description="Leads to a hypomelanization phenotype and growth defect on copper-deficient conditions; when associated with A-65." evidence="5">
    <original>H</original>
    <variation>A</variation>
    <location>
        <position position="64"/>
    </location>
</feature>
<feature type="mutagenesis site" description="Leads to a hypomelanization phenotype and growth defect on copper-deficient conditions; when associated with A-64." evidence="5">
    <original>H</original>
    <variation>A</variation>
    <location>
        <position position="65"/>
    </location>
</feature>
<feature type="mutagenesis site" description="Leads to a hypomelanization phenotype and growth defect on copper-deficient conditions." evidence="5">
    <original>D</original>
    <variation>A</variation>
    <variation>S</variation>
    <location>
        <position position="138"/>
    </location>
</feature>
<sequence>MFALKSILVTSLITSTALAHFTLDYPQSRGFVDDTENQFCGGFNTVEARQPFPLGSGPVHIDSHHALATIVAFISTSSNPTSFDDFNTTSNGTAIPLASSIFQVPQGEKCFNIDLQSLNVGLTNGSEVTLQIQYDGGDGNLYQCSDLVLIEGYEVPSNETCTNDASKASNATSTSSGSATATSAAATSSSSGTSGAIKEVVGFGALSLALGIAGLIIL</sequence>
<organism>
    <name type="scientific">Cryptococcus neoformans var. grubii serotype A (strain H99 / ATCC 208821 / CBS 10515 / FGSC 9487)</name>
    <name type="common">Filobasidiella neoformans var. grubii</name>
    <dbReference type="NCBI Taxonomy" id="235443"/>
    <lineage>
        <taxon>Eukaryota</taxon>
        <taxon>Fungi</taxon>
        <taxon>Dikarya</taxon>
        <taxon>Basidiomycota</taxon>
        <taxon>Agaricomycotina</taxon>
        <taxon>Tremellomycetes</taxon>
        <taxon>Tremellales</taxon>
        <taxon>Cryptococcaceae</taxon>
        <taxon>Cryptococcus</taxon>
        <taxon>Cryptococcus neoformans species complex</taxon>
    </lineage>
</organism>
<reference key="1">
    <citation type="journal article" date="2014" name="PLoS Genet.">
        <title>Analysis of the genome and transcriptome of Cryptococcus neoformans var. grubii reveals complex RNA expression and microevolution leading to virulence attenuation.</title>
        <authorList>
            <person name="Janbon G."/>
            <person name="Ormerod K.L."/>
            <person name="Paulet D."/>
            <person name="Byrnes E.J. III"/>
            <person name="Yadav V."/>
            <person name="Chatterjee G."/>
            <person name="Mullapudi N."/>
            <person name="Hon C.-C."/>
            <person name="Billmyre R.B."/>
            <person name="Brunel F."/>
            <person name="Bahn Y.-S."/>
            <person name="Chen W."/>
            <person name="Chen Y."/>
            <person name="Chow E.W.L."/>
            <person name="Coppee J.-Y."/>
            <person name="Floyd-Averette A."/>
            <person name="Gaillardin C."/>
            <person name="Gerik K.J."/>
            <person name="Goldberg J."/>
            <person name="Gonzalez-Hilarion S."/>
            <person name="Gujja S."/>
            <person name="Hamlin J.L."/>
            <person name="Hsueh Y.-P."/>
            <person name="Ianiri G."/>
            <person name="Jones S."/>
            <person name="Kodira C.D."/>
            <person name="Kozubowski L."/>
            <person name="Lam W."/>
            <person name="Marra M."/>
            <person name="Mesner L.D."/>
            <person name="Mieczkowski P.A."/>
            <person name="Moyrand F."/>
            <person name="Nielsen K."/>
            <person name="Proux C."/>
            <person name="Rossignol T."/>
            <person name="Schein J.E."/>
            <person name="Sun S."/>
            <person name="Wollschlaeger C."/>
            <person name="Wood I.A."/>
            <person name="Zeng Q."/>
            <person name="Neuveglise C."/>
            <person name="Newlon C.S."/>
            <person name="Perfect J.R."/>
            <person name="Lodge J.K."/>
            <person name="Idnurm A."/>
            <person name="Stajich J.E."/>
            <person name="Kronstad J.W."/>
            <person name="Sanyal K."/>
            <person name="Heitman J."/>
            <person name="Fraser J.A."/>
            <person name="Cuomo C.A."/>
            <person name="Dietrich F.S."/>
        </authorList>
    </citation>
    <scope>NUCLEOTIDE SEQUENCE [LARGE SCALE GENOMIC DNA]</scope>
    <source>
        <strain>H99 / ATCC 208821 / CBS 10515 / FGSC 9487</strain>
    </source>
</reference>
<reference key="2">
    <citation type="journal article" date="2020" name="Nat. Chem. Biol.">
        <title>A lytic polysaccharide monooxygenase-like protein functions in fungal copper import and meningitis.</title>
        <authorList>
            <person name="Garcia-Santamarina S."/>
            <person name="Probst C."/>
            <person name="Festa R.A."/>
            <person name="Ding C."/>
            <person name="Smith A.D."/>
            <person name="Conklin S.E."/>
            <person name="Brander S."/>
            <person name="Kinch L.N."/>
            <person name="Grishin N.V."/>
            <person name="Franz K.J."/>
            <person name="Riggs-Gelasco P."/>
            <person name="Lo Leggio L."/>
            <person name="Johansen K.S."/>
            <person name="Thiele D.J."/>
        </authorList>
    </citation>
    <scope>FUNCTION</scope>
    <scope>INDUCTION</scope>
    <scope>DISRUPTION PHENOTYPE</scope>
    <scope>INTERACTION WITH CTR1</scope>
    <scope>SUBCELLULAR LOCATION</scope>
    <scope>MUTAGENESIS OF HIS-20; HIS-64; HIS-65 AND ASP-138</scope>
</reference>
<reference key="3">
    <citation type="journal article" date="2020" name="Nat. Chem. Biol.">
        <title>A fungal family of lytic polysaccharide monooxygenase-like copper proteins.</title>
        <authorList>
            <person name="Labourel A."/>
            <person name="Frandsen K.E.H."/>
            <person name="Zhang F."/>
            <person name="Brouilly N."/>
            <person name="Grisel S."/>
            <person name="Haon M."/>
            <person name="Ciano L."/>
            <person name="Ropartz D."/>
            <person name="Fanuel M."/>
            <person name="Martin F."/>
            <person name="Navarro D."/>
            <person name="Rosso M.N."/>
            <person name="Tandrup T."/>
            <person name="Bissaro B."/>
            <person name="Johansen K.S."/>
            <person name="Zerva A."/>
            <person name="Walton P.H."/>
            <person name="Henrissat B."/>
            <person name="Leggio L.L."/>
            <person name="Berrin J.G."/>
        </authorList>
    </citation>
    <scope>IDENTIFICATION</scope>
    <scope>FUNCTION</scope>
</reference>
<reference key="4">
    <citation type="journal article" date="2022" name="PLoS Pathog.">
        <title>Interactions between copper homeostasis and the fungal cell wall affect copper stress resistance.</title>
        <authorList>
            <person name="Probst C."/>
            <person name="Garcia-Santamarina S."/>
            <person name="Brooks J.T."/>
            <person name="Van Der Kloet I."/>
            <person name="Baars O."/>
            <person name="Ralle M."/>
            <person name="Thiele D.J."/>
            <person name="Alspaugh J.A."/>
        </authorList>
    </citation>
    <scope>FUNCTION</scope>
    <scope>DISRUPTION PHENOTYPE</scope>
</reference>